<gene>
    <name type="primary">RFC3</name>
    <name type="ordered locus">YNL290W</name>
    <name type="ORF">N0533</name>
</gene>
<organism>
    <name type="scientific">Saccharomyces cerevisiae (strain ATCC 204508 / S288c)</name>
    <name type="common">Baker's yeast</name>
    <dbReference type="NCBI Taxonomy" id="559292"/>
    <lineage>
        <taxon>Eukaryota</taxon>
        <taxon>Fungi</taxon>
        <taxon>Dikarya</taxon>
        <taxon>Ascomycota</taxon>
        <taxon>Saccharomycotina</taxon>
        <taxon>Saccharomycetes</taxon>
        <taxon>Saccharomycetales</taxon>
        <taxon>Saccharomycetaceae</taxon>
        <taxon>Saccharomyces</taxon>
    </lineage>
</organism>
<sequence length="340" mass="38204">MSTSTEKRSKENLPWVEKYRPETLDEVYGQNEVITTVRKFVDEGKLPHLLFYGPPGTGKTSTIVALAREIYGKNYSNMVLELNASDDRGIDVVRNQIKDFASTRQIFSKGFKLIILDEADAMTNAAQNALRRVIERYTKNTRFCVLANYAHKLTPALLSRCTRFRFQPLPQEAIERRIANVLVHEKLKLSPNAEKALIELSNGDMRRVLNVLQSCKATLDNPDEDEISDDVIYECCGAPRPSDLKAVLKSILEDDWGTAHYTLNKVRSAKGLALIDLIEGIVKILEDYELQNEETRVHLLTKLADIEYSISKGGNDQIQGSAVIGAIKASFENETVKANV</sequence>
<protein>
    <recommendedName>
        <fullName>Replication factor C subunit 3</fullName>
        <shortName>Replication factor C3</shortName>
    </recommendedName>
    <alternativeName>
        <fullName>Activator 1 40 kDa subunit</fullName>
    </alternativeName>
</protein>
<reference key="1">
    <citation type="journal article" date="1994" name="Proc. Natl. Acad. Sci. U.S.A.">
        <title>Molecular cloning and expression of the Saccharomyces cerevisiae RFC3 gene, an essential component of replication factor C.</title>
        <authorList>
            <person name="Li X."/>
            <person name="Burgers P.M.J."/>
        </authorList>
    </citation>
    <scope>NUCLEOTIDE SEQUENCE [GENOMIC DNA]</scope>
</reference>
<reference key="2">
    <citation type="journal article" date="1995" name="Mol. Cell. Biol.">
        <title>Characterization of the five replication factor C genes of Saccharomyces cerevisiae.</title>
        <authorList>
            <person name="Cullmann G."/>
            <person name="Fien K."/>
            <person name="Kobayashi R."/>
            <person name="Stillman B."/>
        </authorList>
    </citation>
    <scope>NUCLEOTIDE SEQUENCE [GENOMIC DNA]</scope>
    <scope>IDENTIFICATION IN THE RFC COMPLEX</scope>
    <source>
        <strain>ATCC 204508 / S288c</strain>
    </source>
</reference>
<reference key="3">
    <citation type="journal article" date="1995" name="Yeast">
        <title>Sequence analysis of a 30 kb DNA segment from yeast chromosome XIV carrying a ribosomal protein gene cluster, the genes encoding a plasma membrane protein and a subunit of replication factor C, and a novel putative serine/threonine protein kinase gene.</title>
        <authorList>
            <person name="Maurer K.C.T."/>
            <person name="Urbanus J.H.M."/>
            <person name="Planta R.J."/>
        </authorList>
    </citation>
    <scope>NUCLEOTIDE SEQUENCE [GENOMIC DNA]</scope>
    <source>
        <strain>ATCC 96604 / S288c / FY1679</strain>
    </source>
</reference>
<reference key="4">
    <citation type="journal article" date="1997" name="Nature">
        <title>The nucleotide sequence of Saccharomyces cerevisiae chromosome XIV and its evolutionary implications.</title>
        <authorList>
            <person name="Philippsen P."/>
            <person name="Kleine K."/>
            <person name="Poehlmann R."/>
            <person name="Duesterhoeft A."/>
            <person name="Hamberg K."/>
            <person name="Hegemann J.H."/>
            <person name="Obermaier B."/>
            <person name="Urrestarazu L.A."/>
            <person name="Aert R."/>
            <person name="Albermann K."/>
            <person name="Altmann R."/>
            <person name="Andre B."/>
            <person name="Baladron V."/>
            <person name="Ballesta J.P.G."/>
            <person name="Becam A.-M."/>
            <person name="Beinhauer J.D."/>
            <person name="Boskovic J."/>
            <person name="Buitrago M.J."/>
            <person name="Bussereau F."/>
            <person name="Coster F."/>
            <person name="Crouzet M."/>
            <person name="D'Angelo M."/>
            <person name="Dal Pero F."/>
            <person name="De Antoni A."/>
            <person name="del Rey F."/>
            <person name="Doignon F."/>
            <person name="Domdey H."/>
            <person name="Dubois E."/>
            <person name="Fiedler T.A."/>
            <person name="Fleig U."/>
            <person name="Floeth M."/>
            <person name="Fritz C."/>
            <person name="Gaillardin C."/>
            <person name="Garcia-Cantalejo J.M."/>
            <person name="Glansdorff N."/>
            <person name="Goffeau A."/>
            <person name="Gueldener U."/>
            <person name="Herbert C.J."/>
            <person name="Heumann K."/>
            <person name="Heuss-Neitzel D."/>
            <person name="Hilbert H."/>
            <person name="Hinni K."/>
            <person name="Iraqui Houssaini I."/>
            <person name="Jacquet M."/>
            <person name="Jimenez A."/>
            <person name="Jonniaux J.-L."/>
            <person name="Karpfinger-Hartl L."/>
            <person name="Lanfranchi G."/>
            <person name="Lepingle A."/>
            <person name="Levesque H."/>
            <person name="Lyck R."/>
            <person name="Maftahi M."/>
            <person name="Mallet L."/>
            <person name="Maurer C.T.C."/>
            <person name="Messenguy F."/>
            <person name="Mewes H.-W."/>
            <person name="Moestl D."/>
            <person name="Nasr F."/>
            <person name="Nicaud J.-M."/>
            <person name="Niedenthal R.K."/>
            <person name="Pandolfo D."/>
            <person name="Pierard A."/>
            <person name="Piravandi E."/>
            <person name="Planta R.J."/>
            <person name="Pohl T.M."/>
            <person name="Purnelle B."/>
            <person name="Rebischung C."/>
            <person name="Remacha M.A."/>
            <person name="Revuelta J.L."/>
            <person name="Rinke M."/>
            <person name="Saiz J.E."/>
            <person name="Sartorello F."/>
            <person name="Scherens B."/>
            <person name="Sen-Gupta M."/>
            <person name="Soler-Mira A."/>
            <person name="Urbanus J.H.M."/>
            <person name="Valle G."/>
            <person name="Van Dyck L."/>
            <person name="Verhasselt P."/>
            <person name="Vierendeels F."/>
            <person name="Vissers S."/>
            <person name="Voet M."/>
            <person name="Volckaert G."/>
            <person name="Wach A."/>
            <person name="Wambutt R."/>
            <person name="Wedler H."/>
            <person name="Zollner A."/>
            <person name="Hani J."/>
        </authorList>
    </citation>
    <scope>NUCLEOTIDE SEQUENCE [LARGE SCALE GENOMIC DNA]</scope>
    <source>
        <strain>ATCC 204508 / S288c</strain>
    </source>
</reference>
<reference key="5">
    <citation type="journal article" date="2014" name="G3 (Bethesda)">
        <title>The reference genome sequence of Saccharomyces cerevisiae: Then and now.</title>
        <authorList>
            <person name="Engel S.R."/>
            <person name="Dietrich F.S."/>
            <person name="Fisk D.G."/>
            <person name="Binkley G."/>
            <person name="Balakrishnan R."/>
            <person name="Costanzo M.C."/>
            <person name="Dwight S.S."/>
            <person name="Hitz B.C."/>
            <person name="Karra K."/>
            <person name="Nash R.S."/>
            <person name="Weng S."/>
            <person name="Wong E.D."/>
            <person name="Lloyd P."/>
            <person name="Skrzypek M.S."/>
            <person name="Miyasato S.R."/>
            <person name="Simison M."/>
            <person name="Cherry J.M."/>
        </authorList>
    </citation>
    <scope>GENOME REANNOTATION</scope>
    <source>
        <strain>ATCC 204508 / S288c</strain>
    </source>
</reference>
<reference key="6">
    <citation type="journal article" date="2000" name="Curr. Biol.">
        <title>A novel Rad24 checkpoint protein complex closely related to replication factor C.</title>
        <authorList>
            <person name="Green C.M."/>
            <person name="Erdjument-Bromage H."/>
            <person name="Tempst P."/>
            <person name="Lowndes N.F."/>
        </authorList>
    </citation>
    <scope>INTERACTION WITH RAD24</scope>
    <scope>IDENTIFICATION IN THE RAD24-RFC COMPLEX</scope>
</reference>
<reference key="7">
    <citation type="journal article" date="2001" name="Mol. Cell">
        <title>Identification of RFC(Ctf18p, Ctf8p, Dcc1p): an alternative RFC complex required for sister chromatid cohesion in S. cerevisiae.</title>
        <authorList>
            <person name="Mayer M.L."/>
            <person name="Gygi S.P."/>
            <person name="Aebersold R."/>
            <person name="Hieter P."/>
        </authorList>
    </citation>
    <scope>IDENTIFICATION IN THE CTF18-RFC COMPLEX</scope>
</reference>
<reference key="8">
    <citation type="journal article" date="2001" name="Mol. Cell. Biol.">
        <title>Chl12 (Ctf18) forms a novel replication factor C-related complex and functions redundantly with Rad24 in the DNA replication checkpoint pathway.</title>
        <authorList>
            <person name="Naiki T."/>
            <person name="Kondo T."/>
            <person name="Nakada D."/>
            <person name="Matsumoto K."/>
            <person name="Sugimoto K."/>
        </authorList>
    </citation>
    <scope>FUNCTION</scope>
    <scope>INTERACTION WITH CTF18</scope>
</reference>
<reference key="9">
    <citation type="journal article" date="2003" name="J. Biol. Chem.">
        <title>Replication factor C clamp loader subunit arrangement within the circular pentamer and its attachment points to proliferating cell nuclear antigen.</title>
        <authorList>
            <person name="Yao N."/>
            <person name="Coryell L."/>
            <person name="Zhang D."/>
            <person name="Georgescu R.E."/>
            <person name="Finkelstein J."/>
            <person name="Coman M.M."/>
            <person name="Hingorani M.M."/>
            <person name="O'Donnell M."/>
        </authorList>
    </citation>
    <scope>FUNCTION</scope>
    <scope>INTERACTION WITH POL30</scope>
</reference>
<reference key="10">
    <citation type="journal article" date="2003" name="Mol. Cell. Biol.">
        <title>Mechanical link between cohesion establishment and DNA replication: Ctf7p/Eco1p, a cohesion establishment factor, associates with three different replication factor C complexes.</title>
        <authorList>
            <person name="Kenna M.A."/>
            <person name="Skibbens R.V."/>
        </authorList>
    </citation>
    <scope>INTERACTION WITH ECO1</scope>
</reference>
<reference key="11">
    <citation type="journal article" date="2003" name="Nature">
        <title>Global analysis of protein expression in yeast.</title>
        <authorList>
            <person name="Ghaemmaghami S."/>
            <person name="Huh W.-K."/>
            <person name="Bower K."/>
            <person name="Howson R.W."/>
            <person name="Belle A."/>
            <person name="Dephoure N."/>
            <person name="O'Shea E.K."/>
            <person name="Weissman J.S."/>
        </authorList>
    </citation>
    <scope>LEVEL OF PROTEIN EXPRESSION [LARGE SCALE ANALYSIS]</scope>
</reference>
<reference key="12">
    <citation type="journal article" date="2003" name="Proc. Natl. Acad. Sci. U.S.A.">
        <title>Yeast Rad17/Mec3/Ddc1: a sliding clamp for the DNA damage checkpoint.</title>
        <authorList>
            <person name="Majka J."/>
            <person name="Burgers P.M.J."/>
        </authorList>
    </citation>
    <scope>IDENTIFICATION IN THE RAD24-RFC COMPLEX</scope>
    <scope>FUNCTION OF THE RAD24-RFC COMPLEX</scope>
</reference>
<reference key="13">
    <citation type="journal article" date="2005" name="Mol. Cell. Biol.">
        <title>Replication protein A-directed unloading of PCNA by the Ctf18 cohesion establishment complex.</title>
        <authorList>
            <person name="Bylund G.O."/>
            <person name="Burgers P.M."/>
        </authorList>
    </citation>
    <scope>IDENTIFICATION IN THE RFC COMPLEX</scope>
    <scope>IDENTIFICATION IN THE RAD24-RFC COMPLEX</scope>
    <scope>IDENTIFICATION IN THE ELG1-RFC COMPLEX</scope>
    <scope>IDENTIFICATION IN THE CTF18-RFC COMPLEX</scope>
    <scope>FUNCTION OF THE CTF18-RFC COMPLEX</scope>
</reference>
<reference key="14">
    <citation type="journal article" date="2012" name="Proc. Natl. Acad. Sci. U.S.A.">
        <title>N-terminal acetylome analyses and functional insights of the N-terminal acetyltransferase NatB.</title>
        <authorList>
            <person name="Van Damme P."/>
            <person name="Lasa M."/>
            <person name="Polevoda B."/>
            <person name="Gazquez C."/>
            <person name="Elosegui-Artola A."/>
            <person name="Kim D.S."/>
            <person name="De Juan-Pardo E."/>
            <person name="Demeyer K."/>
            <person name="Hole K."/>
            <person name="Larrea E."/>
            <person name="Timmerman E."/>
            <person name="Prieto J."/>
            <person name="Arnesen T."/>
            <person name="Sherman F."/>
            <person name="Gevaert K."/>
            <person name="Aldabe R."/>
        </authorList>
    </citation>
    <scope>ACETYLATION [LARGE SCALE ANALYSIS] AT SER-2</scope>
    <scope>CLEAVAGE OF INITIATOR METHIONINE [LARGE SCALE ANALYSIS]</scope>
    <scope>IDENTIFICATION BY MASS SPECTROMETRY [LARGE SCALE ANALYSIS]</scope>
</reference>
<reference key="15">
    <citation type="journal article" date="2004" name="Nature">
        <title>Structural analysis of a eukaryotic sliding DNA clamp-clamp loader complex.</title>
        <authorList>
            <person name="Bowman G.D."/>
            <person name="O'Donnell M."/>
            <person name="Kuriyan J."/>
        </authorList>
    </citation>
    <scope>X-RAY CRYSTALLOGRAPHY (2.85 ANGSTROMS) IN COMPLEX WITH AN ATP ANALOG; RCF1; RCF2; RCF4; RCF5 AND PCNA</scope>
</reference>
<name>RFC3_YEAST</name>
<evidence type="ECO:0000269" key="1">
    <source>
    </source>
</evidence>
<evidence type="ECO:0000269" key="2">
    <source>
    </source>
</evidence>
<evidence type="ECO:0000269" key="3">
    <source>
    </source>
</evidence>
<evidence type="ECO:0000269" key="4">
    <source>
    </source>
</evidence>
<evidence type="ECO:0000269" key="5">
    <source>
    </source>
</evidence>
<evidence type="ECO:0000269" key="6">
    <source>
    </source>
</evidence>
<evidence type="ECO:0000269" key="7">
    <source>
    </source>
</evidence>
<evidence type="ECO:0000269" key="8">
    <source>
    </source>
</evidence>
<evidence type="ECO:0000269" key="9">
    <source>
    </source>
</evidence>
<evidence type="ECO:0000269" key="10">
    <source>
    </source>
</evidence>
<evidence type="ECO:0000305" key="11"/>
<evidence type="ECO:0007744" key="12">
    <source>
    </source>
</evidence>
<evidence type="ECO:0007829" key="13">
    <source>
        <dbReference type="PDB" id="1SXJ"/>
    </source>
</evidence>
<evidence type="ECO:0007829" key="14">
    <source>
        <dbReference type="PDB" id="7U1P"/>
    </source>
</evidence>
<evidence type="ECO:0007829" key="15">
    <source>
        <dbReference type="PDB" id="8DQW"/>
    </source>
</evidence>
<evidence type="ECO:0007829" key="16">
    <source>
        <dbReference type="PDB" id="8DQX"/>
    </source>
</evidence>
<evidence type="ECO:0007829" key="17">
    <source>
        <dbReference type="PDB" id="8DR1"/>
    </source>
</evidence>
<evidence type="ECO:0007829" key="18">
    <source>
        <dbReference type="PDB" id="8DR6"/>
    </source>
</evidence>
<accession>P38629</accession>
<accession>D6W0Q3</accession>
<dbReference type="EMBL" id="L18755">
    <property type="protein sequence ID" value="AAA34969.1"/>
    <property type="molecule type" value="Genomic_DNA"/>
</dbReference>
<dbReference type="EMBL" id="U26029">
    <property type="protein sequence ID" value="AAC49062.1"/>
    <property type="molecule type" value="Genomic_DNA"/>
</dbReference>
<dbReference type="EMBL" id="U23084">
    <property type="protein sequence ID" value="AAC49110.1"/>
    <property type="molecule type" value="Genomic_DNA"/>
</dbReference>
<dbReference type="EMBL" id="Z71566">
    <property type="protein sequence ID" value="CAA96207.1"/>
    <property type="molecule type" value="Genomic_DNA"/>
</dbReference>
<dbReference type="EMBL" id="BK006947">
    <property type="protein sequence ID" value="DAA10269.1"/>
    <property type="molecule type" value="Genomic_DNA"/>
</dbReference>
<dbReference type="PIR" id="A36988">
    <property type="entry name" value="A36988"/>
</dbReference>
<dbReference type="RefSeq" id="NP_014109.1">
    <property type="nucleotide sequence ID" value="NM_001183128.1"/>
</dbReference>
<dbReference type="PDB" id="1SXJ">
    <property type="method" value="X-ray"/>
    <property type="resolution" value="2.85 A"/>
    <property type="chains" value="C=1-340"/>
</dbReference>
<dbReference type="PDB" id="7SGZ">
    <property type="method" value="EM"/>
    <property type="resolution" value="3.17 A"/>
    <property type="chains" value="C=1-340"/>
</dbReference>
<dbReference type="PDB" id="7SH2">
    <property type="method" value="EM"/>
    <property type="resolution" value="3.23 A"/>
    <property type="chains" value="C=1-340"/>
</dbReference>
<dbReference type="PDB" id="7ST9">
    <property type="method" value="EM"/>
    <property type="resolution" value="2.20 A"/>
    <property type="chains" value="C=1-340"/>
</dbReference>
<dbReference type="PDB" id="7STB">
    <property type="method" value="EM"/>
    <property type="resolution" value="2.72 A"/>
    <property type="chains" value="C=1-340"/>
</dbReference>
<dbReference type="PDB" id="7STE">
    <property type="method" value="EM"/>
    <property type="resolution" value="2.73 A"/>
    <property type="chains" value="C=1-339"/>
</dbReference>
<dbReference type="PDB" id="7TFH">
    <property type="method" value="EM"/>
    <property type="resolution" value="3.09 A"/>
    <property type="chains" value="C=1-340"/>
</dbReference>
<dbReference type="PDB" id="7TFI">
    <property type="method" value="EM"/>
    <property type="resolution" value="3.41 A"/>
    <property type="chains" value="C=1-340"/>
</dbReference>
<dbReference type="PDB" id="7TFJ">
    <property type="method" value="EM"/>
    <property type="resolution" value="3.30 A"/>
    <property type="chains" value="C=1-340"/>
</dbReference>
<dbReference type="PDB" id="7TFK">
    <property type="method" value="EM"/>
    <property type="resolution" value="3.25 A"/>
    <property type="chains" value="C=1-340"/>
</dbReference>
<dbReference type="PDB" id="7TFL">
    <property type="method" value="EM"/>
    <property type="resolution" value="3.33 A"/>
    <property type="chains" value="C=1-340"/>
</dbReference>
<dbReference type="PDB" id="7THJ">
    <property type="method" value="EM"/>
    <property type="resolution" value="3.80 A"/>
    <property type="chains" value="C=1-340"/>
</dbReference>
<dbReference type="PDB" id="7THV">
    <property type="method" value="EM"/>
    <property type="resolution" value="4.00 A"/>
    <property type="chains" value="C=1-340"/>
</dbReference>
<dbReference type="PDB" id="7TI8">
    <property type="method" value="EM"/>
    <property type="resolution" value="3.50 A"/>
    <property type="chains" value="C=1-340"/>
</dbReference>
<dbReference type="PDB" id="7TIB">
    <property type="method" value="EM"/>
    <property type="resolution" value="3.40 A"/>
    <property type="chains" value="C=1-340"/>
</dbReference>
<dbReference type="PDB" id="7TIC">
    <property type="method" value="EM"/>
    <property type="resolution" value="3.90 A"/>
    <property type="chains" value="C=1-340"/>
</dbReference>
<dbReference type="PDB" id="7TID">
    <property type="method" value="EM"/>
    <property type="resolution" value="3.30 A"/>
    <property type="chains" value="C=1-340"/>
</dbReference>
<dbReference type="PDB" id="7TKU">
    <property type="method" value="EM"/>
    <property type="resolution" value="4.00 A"/>
    <property type="chains" value="C=1-340"/>
</dbReference>
<dbReference type="PDB" id="7U19">
    <property type="method" value="EM"/>
    <property type="resolution" value="3.70 A"/>
    <property type="chains" value="C=1-340"/>
</dbReference>
<dbReference type="PDB" id="7U1A">
    <property type="method" value="EM"/>
    <property type="resolution" value="3.30 A"/>
    <property type="chains" value="C=1-340"/>
</dbReference>
<dbReference type="PDB" id="7U1P">
    <property type="method" value="EM"/>
    <property type="resolution" value="3.00 A"/>
    <property type="chains" value="C=1-340"/>
</dbReference>
<dbReference type="PDB" id="8DQW">
    <property type="method" value="EM"/>
    <property type="resolution" value="2.10 A"/>
    <property type="chains" value="C=1-340"/>
</dbReference>
<dbReference type="PDB" id="8DQX">
    <property type="method" value="EM"/>
    <property type="resolution" value="2.10 A"/>
    <property type="chains" value="C=1-340"/>
</dbReference>
<dbReference type="PDB" id="8DQZ">
    <property type="method" value="EM"/>
    <property type="resolution" value="2.92 A"/>
    <property type="chains" value="C=1-340"/>
</dbReference>
<dbReference type="PDB" id="8DR0">
    <property type="method" value="EM"/>
    <property type="resolution" value="2.42 A"/>
    <property type="chains" value="C=1-340"/>
</dbReference>
<dbReference type="PDB" id="8DR1">
    <property type="method" value="EM"/>
    <property type="resolution" value="2.14 A"/>
    <property type="chains" value="C=1-340"/>
</dbReference>
<dbReference type="PDB" id="8DR3">
    <property type="method" value="EM"/>
    <property type="resolution" value="2.20 A"/>
    <property type="chains" value="C=1-340"/>
</dbReference>
<dbReference type="PDB" id="8DR4">
    <property type="method" value="EM"/>
    <property type="resolution" value="2.45 A"/>
    <property type="chains" value="C=1-340"/>
</dbReference>
<dbReference type="PDB" id="8DR5">
    <property type="method" value="EM"/>
    <property type="resolution" value="2.76 A"/>
    <property type="chains" value="C=1-340"/>
</dbReference>
<dbReference type="PDB" id="8DR6">
    <property type="method" value="EM"/>
    <property type="resolution" value="2.39 A"/>
    <property type="chains" value="C=1-340"/>
</dbReference>
<dbReference type="PDB" id="8DR7">
    <property type="method" value="EM"/>
    <property type="resolution" value="2.70 A"/>
    <property type="chains" value="C=1-340"/>
</dbReference>
<dbReference type="PDB" id="8FS3">
    <property type="method" value="EM"/>
    <property type="resolution" value="2.93 A"/>
    <property type="chains" value="C=1-336"/>
</dbReference>
<dbReference type="PDB" id="8FS4">
    <property type="method" value="EM"/>
    <property type="resolution" value="2.94 A"/>
    <property type="chains" value="C=1-336"/>
</dbReference>
<dbReference type="PDB" id="8FS5">
    <property type="method" value="EM"/>
    <property type="resolution" value="2.76 A"/>
    <property type="chains" value="C=1-336"/>
</dbReference>
<dbReference type="PDB" id="8FS6">
    <property type="method" value="EM"/>
    <property type="resolution" value="2.90 A"/>
    <property type="chains" value="C=1-336"/>
</dbReference>
<dbReference type="PDB" id="8FS7">
    <property type="method" value="EM"/>
    <property type="resolution" value="2.85 A"/>
    <property type="chains" value="C=1-336"/>
</dbReference>
<dbReference type="PDB" id="8FS8">
    <property type="method" value="EM"/>
    <property type="resolution" value="3.04 A"/>
    <property type="chains" value="C=1-336"/>
</dbReference>
<dbReference type="PDB" id="8THB">
    <property type="method" value="EM"/>
    <property type="resolution" value="3.20 A"/>
    <property type="chains" value="C=1-336"/>
</dbReference>
<dbReference type="PDB" id="8THC">
    <property type="method" value="EM"/>
    <property type="resolution" value="3.67 A"/>
    <property type="chains" value="C=1-336"/>
</dbReference>
<dbReference type="PDB" id="8THD">
    <property type="method" value="EM"/>
    <property type="resolution" value="3.25 A"/>
    <property type="chains" value="C=1-336"/>
</dbReference>
<dbReference type="PDB" id="8TW7">
    <property type="method" value="EM"/>
    <property type="resolution" value="3.80 A"/>
    <property type="chains" value="3=9-335"/>
</dbReference>
<dbReference type="PDB" id="8TW8">
    <property type="method" value="EM"/>
    <property type="resolution" value="3.50 A"/>
    <property type="chains" value="3=9-335"/>
</dbReference>
<dbReference type="PDB" id="8TWA">
    <property type="method" value="EM"/>
    <property type="resolution" value="4.10 A"/>
    <property type="chains" value="3=9-335"/>
</dbReference>
<dbReference type="PDB" id="8TWB">
    <property type="method" value="EM"/>
    <property type="resolution" value="3.20 A"/>
    <property type="chains" value="3=9-335"/>
</dbReference>
<dbReference type="PDBsum" id="1SXJ"/>
<dbReference type="PDBsum" id="7SGZ"/>
<dbReference type="PDBsum" id="7SH2"/>
<dbReference type="PDBsum" id="7ST9"/>
<dbReference type="PDBsum" id="7STB"/>
<dbReference type="PDBsum" id="7STE"/>
<dbReference type="PDBsum" id="7TFH"/>
<dbReference type="PDBsum" id="7TFI"/>
<dbReference type="PDBsum" id="7TFJ"/>
<dbReference type="PDBsum" id="7TFK"/>
<dbReference type="PDBsum" id="7TFL"/>
<dbReference type="PDBsum" id="7THJ"/>
<dbReference type="PDBsum" id="7THV"/>
<dbReference type="PDBsum" id="7TI8"/>
<dbReference type="PDBsum" id="7TIB"/>
<dbReference type="PDBsum" id="7TIC"/>
<dbReference type="PDBsum" id="7TID"/>
<dbReference type="PDBsum" id="7TKU"/>
<dbReference type="PDBsum" id="7U19"/>
<dbReference type="PDBsum" id="7U1A"/>
<dbReference type="PDBsum" id="7U1P"/>
<dbReference type="PDBsum" id="8DQW"/>
<dbReference type="PDBsum" id="8DQX"/>
<dbReference type="PDBsum" id="8DQZ"/>
<dbReference type="PDBsum" id="8DR0"/>
<dbReference type="PDBsum" id="8DR1"/>
<dbReference type="PDBsum" id="8DR3"/>
<dbReference type="PDBsum" id="8DR4"/>
<dbReference type="PDBsum" id="8DR5"/>
<dbReference type="PDBsum" id="8DR6"/>
<dbReference type="PDBsum" id="8DR7"/>
<dbReference type="PDBsum" id="8FS3"/>
<dbReference type="PDBsum" id="8FS4"/>
<dbReference type="PDBsum" id="8FS5"/>
<dbReference type="PDBsum" id="8FS6"/>
<dbReference type="PDBsum" id="8FS7"/>
<dbReference type="PDBsum" id="8FS8"/>
<dbReference type="PDBsum" id="8THB"/>
<dbReference type="PDBsum" id="8THC"/>
<dbReference type="PDBsum" id="8THD"/>
<dbReference type="PDBsum" id="8TW7"/>
<dbReference type="PDBsum" id="8TW8"/>
<dbReference type="PDBsum" id="8TWA"/>
<dbReference type="PDBsum" id="8TWB"/>
<dbReference type="EMDB" id="EMD-25121"/>
<dbReference type="EMDB" id="EMD-25122"/>
<dbReference type="EMDB" id="EMD-25422"/>
<dbReference type="EMDB" id="EMD-25423"/>
<dbReference type="EMDB" id="EMD-25426"/>
<dbReference type="EMDB" id="EMD-25569"/>
<dbReference type="EMDB" id="EMD-25614"/>
<dbReference type="EMDB" id="EMD-25615"/>
<dbReference type="EMDB" id="EMD-25616"/>
<dbReference type="EMDB" id="EMD-25617"/>
<dbReference type="EMDB" id="EMD-25753"/>
<dbReference type="EMDB" id="EMD-25872"/>
<dbReference type="EMDB" id="EMD-25873"/>
<dbReference type="EMDB" id="EMD-25874"/>
<dbReference type="EMDB" id="EMD-25875"/>
<dbReference type="EMDB" id="EMD-25876"/>
<dbReference type="EMDB" id="EMD-26297"/>
<dbReference type="EMDB" id="EMD-26298"/>
<dbReference type="EMDB" id="EMD-26302"/>
<dbReference type="EMDB" id="EMD-27662"/>
<dbReference type="EMDB" id="EMD-27663"/>
<dbReference type="EMDB" id="EMD-27666"/>
<dbReference type="EMDB" id="EMD-27667"/>
<dbReference type="EMDB" id="EMD-27668"/>
<dbReference type="EMDB" id="EMD-27669"/>
<dbReference type="EMDB" id="EMD-27670"/>
<dbReference type="EMDB" id="EMD-27671"/>
<dbReference type="EMDB" id="EMD-27672"/>
<dbReference type="EMDB" id="EMD-27673"/>
<dbReference type="EMDB" id="EMD-29412"/>
<dbReference type="EMDB" id="EMD-29413"/>
<dbReference type="EMDB" id="EMD-29414"/>
<dbReference type="EMDB" id="EMD-29415"/>
<dbReference type="EMDB" id="EMD-29416"/>
<dbReference type="EMDB" id="EMD-29417"/>
<dbReference type="EMDB" id="EMD-41252"/>
<dbReference type="EMDB" id="EMD-41253"/>
<dbReference type="EMDB" id="EMD-41254"/>
<dbReference type="EMDB" id="EMD-41661"/>
<dbReference type="EMDB" id="EMD-41662"/>
<dbReference type="EMDB" id="EMD-41664"/>
<dbReference type="EMDB" id="EMD-41665"/>
<dbReference type="SMR" id="P38629"/>
<dbReference type="BioGRID" id="35547">
    <property type="interactions" value="142"/>
</dbReference>
<dbReference type="ComplexPortal" id="CPX-1731">
    <property type="entry name" value="CTF18-RFC complex"/>
</dbReference>
<dbReference type="ComplexPortal" id="CPX-1807">
    <property type="entry name" value="Rad17 RFC-like complex"/>
</dbReference>
<dbReference type="ComplexPortal" id="CPX-422">
    <property type="entry name" value="ELG1-RFC complex"/>
</dbReference>
<dbReference type="ComplexPortal" id="CPX-545">
    <property type="entry name" value="DNA replication factor C complex"/>
</dbReference>
<dbReference type="DIP" id="DIP-2529N"/>
<dbReference type="FunCoup" id="P38629">
    <property type="interactions" value="939"/>
</dbReference>
<dbReference type="IntAct" id="P38629">
    <property type="interactions" value="51"/>
</dbReference>
<dbReference type="MINT" id="P38629"/>
<dbReference type="STRING" id="4932.YNL290W"/>
<dbReference type="iPTMnet" id="P38629"/>
<dbReference type="PaxDb" id="4932-YNL290W"/>
<dbReference type="PeptideAtlas" id="P38629"/>
<dbReference type="EnsemblFungi" id="YNL290W_mRNA">
    <property type="protein sequence ID" value="YNL290W"/>
    <property type="gene ID" value="YNL290W"/>
</dbReference>
<dbReference type="GeneID" id="855426"/>
<dbReference type="KEGG" id="sce:YNL290W"/>
<dbReference type="AGR" id="SGD:S000005234"/>
<dbReference type="SGD" id="S000005234">
    <property type="gene designation" value="RFC3"/>
</dbReference>
<dbReference type="VEuPathDB" id="FungiDB:YNL290W"/>
<dbReference type="eggNOG" id="KOG0990">
    <property type="taxonomic scope" value="Eukaryota"/>
</dbReference>
<dbReference type="GeneTree" id="ENSGT00550000075072"/>
<dbReference type="HOGENOM" id="CLU_042324_2_0_1"/>
<dbReference type="InParanoid" id="P38629"/>
<dbReference type="OMA" id="AEDNLPW"/>
<dbReference type="OrthoDB" id="4199794at2759"/>
<dbReference type="BioCyc" id="YEAST:G3O-33280-MONOMER"/>
<dbReference type="Reactome" id="R-SCE-110312">
    <property type="pathway name" value="Translesion synthesis by REV1"/>
</dbReference>
<dbReference type="Reactome" id="R-SCE-110320">
    <property type="pathway name" value="Translesion Synthesis by POLH"/>
</dbReference>
<dbReference type="Reactome" id="R-SCE-176187">
    <property type="pathway name" value="Activation of ATR in response to replication stress"/>
</dbReference>
<dbReference type="Reactome" id="R-SCE-5655862">
    <property type="pathway name" value="Translesion synthesis by POLK"/>
</dbReference>
<dbReference type="Reactome" id="R-SCE-5656121">
    <property type="pathway name" value="Translesion synthesis by POLI"/>
</dbReference>
<dbReference type="Reactome" id="R-SCE-5656169">
    <property type="pathway name" value="Termination of translesion DNA synthesis"/>
</dbReference>
<dbReference type="Reactome" id="R-SCE-5696397">
    <property type="pathway name" value="Gap-filling DNA repair synthesis and ligation in GG-NER"/>
</dbReference>
<dbReference type="Reactome" id="R-SCE-6782135">
    <property type="pathway name" value="Dual incision in TC-NER"/>
</dbReference>
<dbReference type="Reactome" id="R-SCE-6782210">
    <property type="pathway name" value="Gap-filling DNA repair synthesis and ligation in TC-NER"/>
</dbReference>
<dbReference type="Reactome" id="R-SCE-69091">
    <property type="pathway name" value="Polymerase switching"/>
</dbReference>
<dbReference type="BioGRID-ORCS" id="855426">
    <property type="hits" value="10 hits in 10 CRISPR screens"/>
</dbReference>
<dbReference type="EvolutionaryTrace" id="P38629"/>
<dbReference type="PRO" id="PR:P38629"/>
<dbReference type="Proteomes" id="UP000002311">
    <property type="component" value="Chromosome XIV"/>
</dbReference>
<dbReference type="RNAct" id="P38629">
    <property type="molecule type" value="protein"/>
</dbReference>
<dbReference type="GO" id="GO:0031390">
    <property type="term" value="C:Ctf18 RFC-like complex"/>
    <property type="evidence" value="ECO:0000353"/>
    <property type="project" value="ComplexPortal"/>
</dbReference>
<dbReference type="GO" id="GO:0005829">
    <property type="term" value="C:cytosol"/>
    <property type="evidence" value="ECO:0000314"/>
    <property type="project" value="SGD"/>
</dbReference>
<dbReference type="GO" id="GO:0005663">
    <property type="term" value="C:DNA replication factor C complex"/>
    <property type="evidence" value="ECO:0000314"/>
    <property type="project" value="SGD"/>
</dbReference>
<dbReference type="GO" id="GO:0031391">
    <property type="term" value="C:Elg1 RFC-like complex"/>
    <property type="evidence" value="ECO:0000353"/>
    <property type="project" value="SGD"/>
</dbReference>
<dbReference type="GO" id="GO:0005634">
    <property type="term" value="C:nucleus"/>
    <property type="evidence" value="ECO:0000314"/>
    <property type="project" value="SGD"/>
</dbReference>
<dbReference type="GO" id="GO:0031389">
    <property type="term" value="C:Rad17 RFC-like complex"/>
    <property type="evidence" value="ECO:0000314"/>
    <property type="project" value="SGD"/>
</dbReference>
<dbReference type="GO" id="GO:0005524">
    <property type="term" value="F:ATP binding"/>
    <property type="evidence" value="ECO:0007669"/>
    <property type="project" value="UniProtKB-KW"/>
</dbReference>
<dbReference type="GO" id="GO:0016887">
    <property type="term" value="F:ATP hydrolysis activity"/>
    <property type="evidence" value="ECO:0000314"/>
    <property type="project" value="SGD"/>
</dbReference>
<dbReference type="GO" id="GO:0003677">
    <property type="term" value="F:DNA binding"/>
    <property type="evidence" value="ECO:0007669"/>
    <property type="project" value="UniProtKB-KW"/>
</dbReference>
<dbReference type="GO" id="GO:0000077">
    <property type="term" value="P:DNA damage checkpoint signaling"/>
    <property type="evidence" value="ECO:0000303"/>
    <property type="project" value="ComplexPortal"/>
</dbReference>
<dbReference type="GO" id="GO:0006281">
    <property type="term" value="P:DNA repair"/>
    <property type="evidence" value="ECO:0000318"/>
    <property type="project" value="GO_Central"/>
</dbReference>
<dbReference type="GO" id="GO:0006261">
    <property type="term" value="P:DNA-templated DNA replication"/>
    <property type="evidence" value="ECO:0000314"/>
    <property type="project" value="ComplexPortal"/>
</dbReference>
<dbReference type="GO" id="GO:0006272">
    <property type="term" value="P:leading strand elongation"/>
    <property type="evidence" value="ECO:0000314"/>
    <property type="project" value="SGD"/>
</dbReference>
<dbReference type="GO" id="GO:0006298">
    <property type="term" value="P:mismatch repair"/>
    <property type="evidence" value="ECO:0000304"/>
    <property type="project" value="SGD"/>
</dbReference>
<dbReference type="GO" id="GO:0007064">
    <property type="term" value="P:mitotic sister chromatid cohesion"/>
    <property type="evidence" value="ECO:0000303"/>
    <property type="project" value="ComplexPortal"/>
</dbReference>
<dbReference type="CDD" id="cd00009">
    <property type="entry name" value="AAA"/>
    <property type="match status" value="1"/>
</dbReference>
<dbReference type="CDD" id="cd18133">
    <property type="entry name" value="HLD_clamp"/>
    <property type="match status" value="1"/>
</dbReference>
<dbReference type="FunFam" id="1.10.8.60:FF:000028">
    <property type="entry name" value="Replication factor C subunit 5"/>
    <property type="match status" value="1"/>
</dbReference>
<dbReference type="FunFam" id="1.20.272.10:FF:000004">
    <property type="entry name" value="Replication factor C subunit 5"/>
    <property type="match status" value="1"/>
</dbReference>
<dbReference type="FunFam" id="3.40.50.300:FF:000129">
    <property type="entry name" value="Replication factor C subunit 5"/>
    <property type="match status" value="1"/>
</dbReference>
<dbReference type="Gene3D" id="1.10.8.60">
    <property type="match status" value="1"/>
</dbReference>
<dbReference type="Gene3D" id="1.20.272.10">
    <property type="match status" value="1"/>
</dbReference>
<dbReference type="Gene3D" id="3.40.50.300">
    <property type="entry name" value="P-loop containing nucleotide triphosphate hydrolases"/>
    <property type="match status" value="1"/>
</dbReference>
<dbReference type="InterPro" id="IPR003593">
    <property type="entry name" value="AAA+_ATPase"/>
</dbReference>
<dbReference type="InterPro" id="IPR003959">
    <property type="entry name" value="ATPase_AAA_core"/>
</dbReference>
<dbReference type="InterPro" id="IPR008921">
    <property type="entry name" value="DNA_pol3_clamp-load_cplx_C"/>
</dbReference>
<dbReference type="InterPro" id="IPR050238">
    <property type="entry name" value="DNA_Rep/Repair_Clamp_Loader"/>
</dbReference>
<dbReference type="InterPro" id="IPR027417">
    <property type="entry name" value="P-loop_NTPase"/>
</dbReference>
<dbReference type="InterPro" id="IPR013748">
    <property type="entry name" value="Rep_factorC_C"/>
</dbReference>
<dbReference type="NCBIfam" id="NF001679">
    <property type="entry name" value="PRK00440.1"/>
    <property type="match status" value="1"/>
</dbReference>
<dbReference type="PANTHER" id="PTHR11669">
    <property type="entry name" value="REPLICATION FACTOR C / DNA POLYMERASE III GAMMA-TAU SUBUNIT"/>
    <property type="match status" value="1"/>
</dbReference>
<dbReference type="PANTHER" id="PTHR11669:SF9">
    <property type="entry name" value="REPLICATION FACTOR C SUBUNIT 5"/>
    <property type="match status" value="1"/>
</dbReference>
<dbReference type="Pfam" id="PF00004">
    <property type="entry name" value="AAA"/>
    <property type="match status" value="1"/>
</dbReference>
<dbReference type="Pfam" id="PF25361">
    <property type="entry name" value="AAA_lid_RFC1"/>
    <property type="match status" value="1"/>
</dbReference>
<dbReference type="Pfam" id="PF08542">
    <property type="entry name" value="Rep_fac_C"/>
    <property type="match status" value="1"/>
</dbReference>
<dbReference type="SMART" id="SM00382">
    <property type="entry name" value="AAA"/>
    <property type="match status" value="1"/>
</dbReference>
<dbReference type="SUPFAM" id="SSF52540">
    <property type="entry name" value="P-loop containing nucleoside triphosphate hydrolases"/>
    <property type="match status" value="1"/>
</dbReference>
<dbReference type="SUPFAM" id="SSF48019">
    <property type="entry name" value="post-AAA+ oligomerization domain-like"/>
    <property type="match status" value="1"/>
</dbReference>
<proteinExistence type="evidence at protein level"/>
<feature type="initiator methionine" description="Removed" evidence="12">
    <location>
        <position position="1"/>
    </location>
</feature>
<feature type="chain" id="PRO_0000121756" description="Replication factor C subunit 3">
    <location>
        <begin position="2"/>
        <end position="340"/>
    </location>
</feature>
<feature type="binding site">
    <location>
        <begin position="16"/>
        <end position="19"/>
    </location>
    <ligand>
        <name>ATP</name>
        <dbReference type="ChEBI" id="CHEBI:30616"/>
    </ligand>
</feature>
<feature type="binding site">
    <location>
        <position position="20"/>
    </location>
    <ligand>
        <name>ATP</name>
        <dbReference type="ChEBI" id="CHEBI:30616"/>
    </ligand>
</feature>
<feature type="binding site">
    <location>
        <position position="28"/>
    </location>
    <ligand>
        <name>ATP</name>
        <dbReference type="ChEBI" id="CHEBI:30616"/>
    </ligand>
</feature>
<feature type="binding site">
    <location>
        <begin position="53"/>
        <end position="61"/>
    </location>
    <ligand>
        <name>ATP</name>
        <dbReference type="ChEBI" id="CHEBI:30616"/>
    </ligand>
</feature>
<feature type="binding site">
    <location>
        <position position="148"/>
    </location>
    <ligand>
        <name>ATP</name>
        <dbReference type="ChEBI" id="CHEBI:30616"/>
    </ligand>
</feature>
<feature type="binding site">
    <location>
        <position position="206"/>
    </location>
    <ligand>
        <name>ATP</name>
        <dbReference type="ChEBI" id="CHEBI:30616"/>
    </ligand>
</feature>
<feature type="modified residue" description="N-acetylserine" evidence="12">
    <location>
        <position position="2"/>
    </location>
</feature>
<feature type="helix" evidence="15">
    <location>
        <begin position="10"/>
        <end position="12"/>
    </location>
</feature>
<feature type="helix" evidence="15">
    <location>
        <begin position="15"/>
        <end position="18"/>
    </location>
</feature>
<feature type="helix" evidence="15">
    <location>
        <begin position="24"/>
        <end position="26"/>
    </location>
</feature>
<feature type="helix" evidence="15">
    <location>
        <begin position="31"/>
        <end position="43"/>
    </location>
</feature>
<feature type="strand" evidence="15">
    <location>
        <begin position="49"/>
        <end position="52"/>
    </location>
</feature>
<feature type="strand" evidence="13">
    <location>
        <begin position="54"/>
        <end position="58"/>
    </location>
</feature>
<feature type="helix" evidence="15">
    <location>
        <begin position="59"/>
        <end position="71"/>
    </location>
</feature>
<feature type="helix" evidence="15">
    <location>
        <begin position="72"/>
        <end position="77"/>
    </location>
</feature>
<feature type="strand" evidence="15">
    <location>
        <begin position="78"/>
        <end position="82"/>
    </location>
</feature>
<feature type="turn" evidence="14">
    <location>
        <begin position="84"/>
        <end position="86"/>
    </location>
</feature>
<feature type="helix" evidence="15">
    <location>
        <begin position="90"/>
        <end position="101"/>
    </location>
</feature>
<feature type="strand" evidence="16">
    <location>
        <begin position="106"/>
        <end position="108"/>
    </location>
</feature>
<feature type="strand" evidence="15">
    <location>
        <begin position="112"/>
        <end position="116"/>
    </location>
</feature>
<feature type="helix" evidence="15">
    <location>
        <begin position="119"/>
        <end position="121"/>
    </location>
</feature>
<feature type="helix" evidence="15">
    <location>
        <begin position="124"/>
        <end position="136"/>
    </location>
</feature>
<feature type="turn" evidence="15">
    <location>
        <begin position="137"/>
        <end position="140"/>
    </location>
</feature>
<feature type="strand" evidence="15">
    <location>
        <begin position="141"/>
        <end position="148"/>
    </location>
</feature>
<feature type="helix" evidence="15">
    <location>
        <begin position="150"/>
        <end position="152"/>
    </location>
</feature>
<feature type="helix" evidence="15">
    <location>
        <begin position="155"/>
        <end position="160"/>
    </location>
</feature>
<feature type="strand" evidence="15">
    <location>
        <begin position="161"/>
        <end position="165"/>
    </location>
</feature>
<feature type="helix" evidence="15">
    <location>
        <begin position="171"/>
        <end position="184"/>
    </location>
</feature>
<feature type="helix" evidence="15">
    <location>
        <begin position="191"/>
        <end position="201"/>
    </location>
</feature>
<feature type="helix" evidence="15">
    <location>
        <begin position="205"/>
        <end position="218"/>
    </location>
</feature>
<feature type="strand" evidence="18">
    <location>
        <begin position="219"/>
        <end position="221"/>
    </location>
</feature>
<feature type="turn" evidence="15">
    <location>
        <begin position="222"/>
        <end position="224"/>
    </location>
</feature>
<feature type="helix" evidence="15">
    <location>
        <begin position="229"/>
        <end position="236"/>
    </location>
</feature>
<feature type="helix" evidence="15">
    <location>
        <begin position="241"/>
        <end position="253"/>
    </location>
</feature>
<feature type="helix" evidence="15">
    <location>
        <begin position="256"/>
        <end position="270"/>
    </location>
</feature>
<feature type="helix" evidence="15">
    <location>
        <begin position="274"/>
        <end position="286"/>
    </location>
</feature>
<feature type="helix" evidence="15">
    <location>
        <begin position="293"/>
        <end position="311"/>
    </location>
</feature>
<feature type="helix" evidence="15">
    <location>
        <begin position="316"/>
        <end position="331"/>
    </location>
</feature>
<feature type="helix" evidence="17">
    <location>
        <begin position="332"/>
        <end position="334"/>
    </location>
</feature>
<comment type="function">
    <text evidence="3 4 6 9">Component of ATP-dependent clamp loader (RFC and RFC-like) complexes for DNA clamps, such as the POL30/PCNA homotrimer and the checkpoint clamp DDC1:MEC3:RAD17 complex. During a clamp loading circle, the RFC:clamp complex binds to DNA and the recognition of the double-stranded/single-stranded junction stimulates ATP hydrolysis by RFC. The complex presumably provides bipartite ATP sites in which one subunit supplies a catalytic site for hydrolysis of ATP bound to the neighboring subunit. Dissociation of RFC from the clamp leaves the clamp encircling DNA. Component of the replication factor C (RFC or activator 1) complex which loads POL30/PCNA and acts during elongation of primed DNA templates by DNA polymerase delta and epsilon. RFC has an essential but redundant activity in sister chromatid cohesion establishment. Component of the RFC-like complex CTF18-RFC which is required for efficient establishment of chromosome cohesion during S-phase and may load or unload POL30/PCNA. Component of the RFC-like RAD24-RFC complex which loads the checkpoint clamp DDC1:MEC3:RAD17 complex and is involved in DNA repair pathways. Component of the RFC-like ELG1-RFC complex which appears to have a role in DNA replication, replication fork re-start, recombination and repair. RFC3 supplies a catalytic site to the ATP site of RFC4.</text>
</comment>
<comment type="subunit">
    <text evidence="1 2 3 4 5 6 8 9 10">Replication factor C (RFC) is a heteropentamer of subunits RFC1, RFC2, RFC3, RFC4 and RFC5 and forms a complex with POL30/PCNA in the presence of ATP. Component of the RAD24-RFC complex which consists of RAD14, RFC2, RFC3, RFC4 and RFC5 and associates with the checkpoint clamp DDC1:MEC3:RAD17 complex. Component of the ELG1-RFC complex which consists of ELG1, RFC2, RFC3, RFC4 and RFC5. Component of the CTF18-RFC complex, which consists of CTF18, CTF8, DCC1, RFC2, RFC3, RFC4 and RFC5. RFC3 interacts with ECO1 and POL30/PCNA.</text>
</comment>
<comment type="interaction">
    <interactant intactId="EBI-15000">
        <id>P38629</id>
    </interactant>
    <interactant intactId="EBI-4560">
        <id>P49956</id>
        <label>CTF18</label>
    </interactant>
    <organismsDiffer>false</organismsDiffer>
    <experiments>4</experiments>
</comment>
<comment type="interaction">
    <interactant intactId="EBI-15000">
        <id>P38629</id>
    </interactant>
    <interactant intactId="EBI-5216">
        <id>P38877</id>
        <label>CTF8</label>
    </interactant>
    <organismsDiffer>false</organismsDiffer>
    <experiments>3</experiments>
</comment>
<comment type="interaction">
    <interactant intactId="EBI-15000">
        <id>P38629</id>
    </interactant>
    <interactant intactId="EBI-32195">
        <id>Q12050</id>
        <label>ELG1</label>
    </interactant>
    <organismsDiffer>false</organismsDiffer>
    <experiments>2</experiments>
</comment>
<comment type="interaction">
    <interactant intactId="EBI-15000">
        <id>P38629</id>
    </interactant>
    <interactant intactId="EBI-14675">
        <id>P32641</id>
        <label>RAD24</label>
    </interactant>
    <organismsDiffer>false</organismsDiffer>
    <experiments>6</experiments>
</comment>
<comment type="interaction">
    <interactant intactId="EBI-15000">
        <id>P38629</id>
    </interactant>
    <interactant intactId="EBI-14992">
        <id>P40348</id>
        <label>RFC2</label>
    </interactant>
    <organismsDiffer>false</organismsDiffer>
    <experiments>5</experiments>
</comment>
<comment type="subcellular location">
    <subcellularLocation>
        <location evidence="11">Nucleus</location>
    </subcellularLocation>
</comment>
<comment type="miscellaneous">
    <text evidence="7">Present with 3140 molecules/cell in log phase SD medium.</text>
</comment>
<comment type="similarity">
    <text evidence="11">Belongs to the activator 1 small subunits family.</text>
</comment>
<keyword id="KW-0002">3D-structure</keyword>
<keyword id="KW-0007">Acetylation</keyword>
<keyword id="KW-0067">ATP-binding</keyword>
<keyword id="KW-0131">Cell cycle</keyword>
<keyword id="KW-0235">DNA replication</keyword>
<keyword id="KW-0238">DNA-binding</keyword>
<keyword id="KW-0547">Nucleotide-binding</keyword>
<keyword id="KW-0539">Nucleus</keyword>
<keyword id="KW-1185">Reference proteome</keyword>